<evidence type="ECO:0000255" key="1">
    <source>
        <dbReference type="PROSITE-ProRule" id="PRU00108"/>
    </source>
</evidence>
<evidence type="ECO:0000256" key="2">
    <source>
        <dbReference type="SAM" id="MobiDB-lite"/>
    </source>
</evidence>
<evidence type="ECO:0000269" key="3">
    <source>
    </source>
</evidence>
<evidence type="ECO:0000269" key="4">
    <source>
    </source>
</evidence>
<evidence type="ECO:0000305" key="5"/>
<organism>
    <name type="scientific">Drosophila melanogaster</name>
    <name type="common">Fruit fly</name>
    <dbReference type="NCBI Taxonomy" id="7227"/>
    <lineage>
        <taxon>Eukaryota</taxon>
        <taxon>Metazoa</taxon>
        <taxon>Ecdysozoa</taxon>
        <taxon>Arthropoda</taxon>
        <taxon>Hexapoda</taxon>
        <taxon>Insecta</taxon>
        <taxon>Pterygota</taxon>
        <taxon>Neoptera</taxon>
        <taxon>Endopterygota</taxon>
        <taxon>Diptera</taxon>
        <taxon>Brachycera</taxon>
        <taxon>Muscomorpha</taxon>
        <taxon>Ephydroidea</taxon>
        <taxon>Drosophilidae</taxon>
        <taxon>Drosophila</taxon>
        <taxon>Sophophora</taxon>
    </lineage>
</organism>
<dbReference type="EMBL" id="S77459">
    <property type="protein sequence ID" value="AAB34685.1"/>
    <property type="molecule type" value="mRNA"/>
</dbReference>
<dbReference type="EMBL" id="L31626">
    <property type="protein sequence ID" value="AAA21800.1"/>
    <property type="molecule type" value="mRNA"/>
</dbReference>
<dbReference type="EMBL" id="AE013599">
    <property type="protein sequence ID" value="AAF59260.1"/>
    <property type="molecule type" value="Genomic_DNA"/>
</dbReference>
<dbReference type="EMBL" id="BT029256">
    <property type="protein sequence ID" value="ABK30893.1"/>
    <property type="molecule type" value="mRNA"/>
</dbReference>
<dbReference type="PIR" id="S50342">
    <property type="entry name" value="S50342"/>
</dbReference>
<dbReference type="RefSeq" id="NP_476733.1">
    <property type="nucleotide sequence ID" value="NM_057385.5"/>
</dbReference>
<dbReference type="SMR" id="Q27350"/>
<dbReference type="BioGRID" id="61542">
    <property type="interactions" value="40"/>
</dbReference>
<dbReference type="DIP" id="DIP-18228N"/>
<dbReference type="FunCoup" id="Q27350">
    <property type="interactions" value="16"/>
</dbReference>
<dbReference type="IntAct" id="Q27350">
    <property type="interactions" value="10"/>
</dbReference>
<dbReference type="STRING" id="7227.FBpp0089177"/>
<dbReference type="PaxDb" id="7227-FBpp0089177"/>
<dbReference type="EnsemblMetazoa" id="FBtr0088970">
    <property type="protein sequence ID" value="FBpp0089177"/>
    <property type="gene ID" value="FBgn0003460"/>
</dbReference>
<dbReference type="GeneID" id="35662"/>
<dbReference type="KEGG" id="dme:Dmel_CG11121"/>
<dbReference type="AGR" id="FB:FBgn0003460"/>
<dbReference type="CTD" id="35662"/>
<dbReference type="FlyBase" id="FBgn0003460">
    <property type="gene designation" value="so"/>
</dbReference>
<dbReference type="VEuPathDB" id="VectorBase:FBgn0003460"/>
<dbReference type="eggNOG" id="KOG0775">
    <property type="taxonomic scope" value="Eukaryota"/>
</dbReference>
<dbReference type="HOGENOM" id="CLU_046914_5_1_1"/>
<dbReference type="InParanoid" id="Q27350"/>
<dbReference type="OMA" id="AMPMTMY"/>
<dbReference type="OrthoDB" id="3501850at2759"/>
<dbReference type="PhylomeDB" id="Q27350"/>
<dbReference type="SignaLink" id="Q27350"/>
<dbReference type="BioGRID-ORCS" id="35662">
    <property type="hits" value="0 hits in 3 CRISPR screens"/>
</dbReference>
<dbReference type="GenomeRNAi" id="35662"/>
<dbReference type="PRO" id="PR:Q27350"/>
<dbReference type="Proteomes" id="UP000000803">
    <property type="component" value="Chromosome 2R"/>
</dbReference>
<dbReference type="Bgee" id="FBgn0003460">
    <property type="expression patterns" value="Expressed in escort cell (Drosophila) in ovary and 67 other cell types or tissues"/>
</dbReference>
<dbReference type="ExpressionAtlas" id="Q27350">
    <property type="expression patterns" value="baseline and differential"/>
</dbReference>
<dbReference type="GO" id="GO:0005634">
    <property type="term" value="C:nucleus"/>
    <property type="evidence" value="ECO:0000314"/>
    <property type="project" value="FlyBase"/>
</dbReference>
<dbReference type="GO" id="GO:0005667">
    <property type="term" value="C:transcription regulator complex"/>
    <property type="evidence" value="ECO:0000318"/>
    <property type="project" value="GO_Central"/>
</dbReference>
<dbReference type="GO" id="GO:0000981">
    <property type="term" value="F:DNA-binding transcription factor activity, RNA polymerase II-specific"/>
    <property type="evidence" value="ECO:0000314"/>
    <property type="project" value="FlyBase"/>
</dbReference>
<dbReference type="GO" id="GO:0000978">
    <property type="term" value="F:RNA polymerase II cis-regulatory region sequence-specific DNA binding"/>
    <property type="evidence" value="ECO:0000318"/>
    <property type="project" value="GO_Central"/>
</dbReference>
<dbReference type="GO" id="GO:0043565">
    <property type="term" value="F:sequence-specific DNA binding"/>
    <property type="evidence" value="ECO:0000314"/>
    <property type="project" value="FlyBase"/>
</dbReference>
<dbReference type="GO" id="GO:0001223">
    <property type="term" value="F:transcription coactivator binding"/>
    <property type="evidence" value="ECO:0000353"/>
    <property type="project" value="FlyBase"/>
</dbReference>
<dbReference type="GO" id="GO:0001222">
    <property type="term" value="F:transcription corepressor binding"/>
    <property type="evidence" value="ECO:0000353"/>
    <property type="project" value="FlyBase"/>
</dbReference>
<dbReference type="GO" id="GO:0001746">
    <property type="term" value="P:Bolwig's organ morphogenesis"/>
    <property type="evidence" value="ECO:0000315"/>
    <property type="project" value="FlyBase"/>
</dbReference>
<dbReference type="GO" id="GO:0007623">
    <property type="term" value="P:circadian rhythm"/>
    <property type="evidence" value="ECO:0000316"/>
    <property type="project" value="FlyBase"/>
</dbReference>
<dbReference type="GO" id="GO:0048749">
    <property type="term" value="P:compound eye development"/>
    <property type="evidence" value="ECO:0000315"/>
    <property type="project" value="FlyBase"/>
</dbReference>
<dbReference type="GO" id="GO:0001745">
    <property type="term" value="P:compound eye morphogenesis"/>
    <property type="evidence" value="ECO:0000315"/>
    <property type="project" value="FlyBase"/>
</dbReference>
<dbReference type="GO" id="GO:0009649">
    <property type="term" value="P:entrainment of circadian clock"/>
    <property type="evidence" value="ECO:0000315"/>
    <property type="project" value="FlyBase"/>
</dbReference>
<dbReference type="GO" id="GO:0008347">
    <property type="term" value="P:glial cell migration"/>
    <property type="evidence" value="ECO:0000315"/>
    <property type="project" value="FlyBase"/>
</dbReference>
<dbReference type="GO" id="GO:0001744">
    <property type="term" value="P:insect visual primordium formation"/>
    <property type="evidence" value="ECO:0000315"/>
    <property type="project" value="FlyBase"/>
</dbReference>
<dbReference type="GO" id="GO:0045944">
    <property type="term" value="P:positive regulation of transcription by RNA polymerase II"/>
    <property type="evidence" value="ECO:0000314"/>
    <property type="project" value="FlyBase"/>
</dbReference>
<dbReference type="GO" id="GO:0006357">
    <property type="term" value="P:regulation of transcription by RNA polymerase II"/>
    <property type="evidence" value="ECO:0000318"/>
    <property type="project" value="GO_Central"/>
</dbReference>
<dbReference type="GO" id="GO:0035271">
    <property type="term" value="P:ring gland development"/>
    <property type="evidence" value="ECO:0000315"/>
    <property type="project" value="FlyBase"/>
</dbReference>
<dbReference type="GO" id="GO:0007283">
    <property type="term" value="P:spermatogenesis"/>
    <property type="evidence" value="ECO:0000315"/>
    <property type="project" value="FlyBase"/>
</dbReference>
<dbReference type="CDD" id="cd00086">
    <property type="entry name" value="homeodomain"/>
    <property type="match status" value="1"/>
</dbReference>
<dbReference type="FunFam" id="1.10.10.60:FF:000063">
    <property type="entry name" value="SIX homeobox 2"/>
    <property type="match status" value="1"/>
</dbReference>
<dbReference type="Gene3D" id="1.10.10.60">
    <property type="entry name" value="Homeodomain-like"/>
    <property type="match status" value="1"/>
</dbReference>
<dbReference type="InterPro" id="IPR001356">
    <property type="entry name" value="HD"/>
</dbReference>
<dbReference type="InterPro" id="IPR017970">
    <property type="entry name" value="Homeobox_CS"/>
</dbReference>
<dbReference type="InterPro" id="IPR009057">
    <property type="entry name" value="Homeodomain-like_sf"/>
</dbReference>
<dbReference type="InterPro" id="IPR008422">
    <property type="entry name" value="KN_HD"/>
</dbReference>
<dbReference type="InterPro" id="IPR031701">
    <property type="entry name" value="SIX1_SD"/>
</dbReference>
<dbReference type="PANTHER" id="PTHR10390">
    <property type="entry name" value="HOMEOBOX PROTEIN SIX"/>
    <property type="match status" value="1"/>
</dbReference>
<dbReference type="PANTHER" id="PTHR10390:SF61">
    <property type="entry name" value="HOMEOBOX PROTEIN SIX2"/>
    <property type="match status" value="1"/>
</dbReference>
<dbReference type="Pfam" id="PF05920">
    <property type="entry name" value="Homeobox_KN"/>
    <property type="match status" value="1"/>
</dbReference>
<dbReference type="Pfam" id="PF16878">
    <property type="entry name" value="SIX1_SD"/>
    <property type="match status" value="1"/>
</dbReference>
<dbReference type="SMART" id="SM00389">
    <property type="entry name" value="HOX"/>
    <property type="match status" value="1"/>
</dbReference>
<dbReference type="SUPFAM" id="SSF46689">
    <property type="entry name" value="Homeodomain-like"/>
    <property type="match status" value="1"/>
</dbReference>
<dbReference type="PROSITE" id="PS00027">
    <property type="entry name" value="HOMEOBOX_1"/>
    <property type="match status" value="1"/>
</dbReference>
<dbReference type="PROSITE" id="PS50071">
    <property type="entry name" value="HOMEOBOX_2"/>
    <property type="match status" value="1"/>
</dbReference>
<gene>
    <name type="primary">so</name>
    <name type="ORF">CG11121</name>
</gene>
<sequence>MLQHPATDFYDLAAANAAAVLTARHTPPYSPTGLSGSVALHNNNNNNSSTSNNNNSTLDIMAHNGGGAGGGLHLNSSSNGGGGGGVVSGGGSGGRENLPSFGFTQEQVACVCEVLQQAGNIERLGRFLWSLPQCDKLQLNESVLKAKAVVAFHRGQYKELYRLLEHHHFSAQNHAKLQALWLKAHYVEAEKLRGRPLGAVGKYRVRRKFPLPRTIWDGEETSYCFKEKSRSVLRDWYSHNPYPSPREKRDLAEATGLTTTQVSNWFKNRRQRDRAAEHKDGSTDKQHLDSSSDSEMEGSMLPSQSAQHQQQQQQQQHSPGNSSGNNNGLHQQQLQHVAAEQGLQHHPHQPHPASNIANVAATKSSGGGGGGGVSAAAAAQMQMPPLTAAVAYSHLHSVMGAMPMTAMYDMGEYQHL</sequence>
<proteinExistence type="evidence at transcript level"/>
<keyword id="KW-0217">Developmental protein</keyword>
<keyword id="KW-0238">DNA-binding</keyword>
<keyword id="KW-0371">Homeobox</keyword>
<keyword id="KW-0539">Nucleus</keyword>
<keyword id="KW-1185">Reference proteome</keyword>
<protein>
    <recommendedName>
        <fullName>Protein sine oculis</fullName>
    </recommendedName>
</protein>
<feature type="chain" id="PRO_0000049315" description="Protein sine oculis">
    <location>
        <begin position="1"/>
        <end position="416"/>
    </location>
</feature>
<feature type="DNA-binding region" description="Homeobox" evidence="1">
    <location>
        <begin position="218"/>
        <end position="277"/>
    </location>
</feature>
<feature type="region of interest" description="Disordered" evidence="2">
    <location>
        <begin position="32"/>
        <end position="91"/>
    </location>
</feature>
<feature type="region of interest" description="Disordered" evidence="2">
    <location>
        <begin position="262"/>
        <end position="329"/>
    </location>
</feature>
<feature type="compositionally biased region" description="Low complexity" evidence="2">
    <location>
        <begin position="42"/>
        <end position="57"/>
    </location>
</feature>
<feature type="compositionally biased region" description="Gly residues" evidence="2">
    <location>
        <begin position="79"/>
        <end position="91"/>
    </location>
</feature>
<feature type="compositionally biased region" description="Basic and acidic residues" evidence="2">
    <location>
        <begin position="273"/>
        <end position="290"/>
    </location>
</feature>
<feature type="compositionally biased region" description="Low complexity" evidence="2">
    <location>
        <begin position="291"/>
        <end position="329"/>
    </location>
</feature>
<accession>Q27350</accession>
<accession>A0AVT8</accession>
<accession>Q9V4L0</accession>
<reference key="1">
    <citation type="journal article" date="1994" name="Genetics">
        <title>Sine oculis is a homeobox gene required for Drosophila visual system development.</title>
        <authorList>
            <person name="Serikaku M.A."/>
            <person name="O'Tousa J.E."/>
        </authorList>
    </citation>
    <scope>NUCLEOTIDE SEQUENCE [MRNA]</scope>
    <scope>FUNCTION</scope>
    <scope>DISRUPTION PHENOTYPE</scope>
    <source>
        <tissue>Head</tissue>
    </source>
</reference>
<reference key="2">
    <citation type="journal article" date="1994" name="Neuron">
        <title>The Drosophila sine oculis locus encodes a homeodomain-containing protein required for the development of the entire visual system.</title>
        <authorList>
            <person name="Cheyette B.N.R."/>
            <person name="Green P.J."/>
            <person name="Martin K."/>
            <person name="Garren H."/>
            <person name="Hartenstein V."/>
            <person name="Zipursky S.L."/>
        </authorList>
    </citation>
    <scope>NUCLEOTIDE SEQUENCE [MRNA]</scope>
    <scope>FUNCTION</scope>
    <scope>SUBCELLULAR LOCATION</scope>
    <scope>TISSUE SPECIFICITY</scope>
    <scope>DEVELOPMENTAL STAGE</scope>
    <scope>DISRUPTION PHENOTYPE</scope>
    <source>
        <tissue>Embryo</tissue>
        <tissue>Eye imaginal disk</tissue>
    </source>
</reference>
<reference key="3">
    <citation type="journal article" date="2000" name="Science">
        <title>The genome sequence of Drosophila melanogaster.</title>
        <authorList>
            <person name="Adams M.D."/>
            <person name="Celniker S.E."/>
            <person name="Holt R.A."/>
            <person name="Evans C.A."/>
            <person name="Gocayne J.D."/>
            <person name="Amanatides P.G."/>
            <person name="Scherer S.E."/>
            <person name="Li P.W."/>
            <person name="Hoskins R.A."/>
            <person name="Galle R.F."/>
            <person name="George R.A."/>
            <person name="Lewis S.E."/>
            <person name="Richards S."/>
            <person name="Ashburner M."/>
            <person name="Henderson S.N."/>
            <person name="Sutton G.G."/>
            <person name="Wortman J.R."/>
            <person name="Yandell M.D."/>
            <person name="Zhang Q."/>
            <person name="Chen L.X."/>
            <person name="Brandon R.C."/>
            <person name="Rogers Y.-H.C."/>
            <person name="Blazej R.G."/>
            <person name="Champe M."/>
            <person name="Pfeiffer B.D."/>
            <person name="Wan K.H."/>
            <person name="Doyle C."/>
            <person name="Baxter E.G."/>
            <person name="Helt G."/>
            <person name="Nelson C.R."/>
            <person name="Miklos G.L.G."/>
            <person name="Abril J.F."/>
            <person name="Agbayani A."/>
            <person name="An H.-J."/>
            <person name="Andrews-Pfannkoch C."/>
            <person name="Baldwin D."/>
            <person name="Ballew R.M."/>
            <person name="Basu A."/>
            <person name="Baxendale J."/>
            <person name="Bayraktaroglu L."/>
            <person name="Beasley E.M."/>
            <person name="Beeson K.Y."/>
            <person name="Benos P.V."/>
            <person name="Berman B.P."/>
            <person name="Bhandari D."/>
            <person name="Bolshakov S."/>
            <person name="Borkova D."/>
            <person name="Botchan M.R."/>
            <person name="Bouck J."/>
            <person name="Brokstein P."/>
            <person name="Brottier P."/>
            <person name="Burtis K.C."/>
            <person name="Busam D.A."/>
            <person name="Butler H."/>
            <person name="Cadieu E."/>
            <person name="Center A."/>
            <person name="Chandra I."/>
            <person name="Cherry J.M."/>
            <person name="Cawley S."/>
            <person name="Dahlke C."/>
            <person name="Davenport L.B."/>
            <person name="Davies P."/>
            <person name="de Pablos B."/>
            <person name="Delcher A."/>
            <person name="Deng Z."/>
            <person name="Mays A.D."/>
            <person name="Dew I."/>
            <person name="Dietz S.M."/>
            <person name="Dodson K."/>
            <person name="Doup L.E."/>
            <person name="Downes M."/>
            <person name="Dugan-Rocha S."/>
            <person name="Dunkov B.C."/>
            <person name="Dunn P."/>
            <person name="Durbin K.J."/>
            <person name="Evangelista C.C."/>
            <person name="Ferraz C."/>
            <person name="Ferriera S."/>
            <person name="Fleischmann W."/>
            <person name="Fosler C."/>
            <person name="Gabrielian A.E."/>
            <person name="Garg N.S."/>
            <person name="Gelbart W.M."/>
            <person name="Glasser K."/>
            <person name="Glodek A."/>
            <person name="Gong F."/>
            <person name="Gorrell J.H."/>
            <person name="Gu Z."/>
            <person name="Guan P."/>
            <person name="Harris M."/>
            <person name="Harris N.L."/>
            <person name="Harvey D.A."/>
            <person name="Heiman T.J."/>
            <person name="Hernandez J.R."/>
            <person name="Houck J."/>
            <person name="Hostin D."/>
            <person name="Houston K.A."/>
            <person name="Howland T.J."/>
            <person name="Wei M.-H."/>
            <person name="Ibegwam C."/>
            <person name="Jalali M."/>
            <person name="Kalush F."/>
            <person name="Karpen G.H."/>
            <person name="Ke Z."/>
            <person name="Kennison J.A."/>
            <person name="Ketchum K.A."/>
            <person name="Kimmel B.E."/>
            <person name="Kodira C.D."/>
            <person name="Kraft C.L."/>
            <person name="Kravitz S."/>
            <person name="Kulp D."/>
            <person name="Lai Z."/>
            <person name="Lasko P."/>
            <person name="Lei Y."/>
            <person name="Levitsky A.A."/>
            <person name="Li J.H."/>
            <person name="Li Z."/>
            <person name="Liang Y."/>
            <person name="Lin X."/>
            <person name="Liu X."/>
            <person name="Mattei B."/>
            <person name="McIntosh T.C."/>
            <person name="McLeod M.P."/>
            <person name="McPherson D."/>
            <person name="Merkulov G."/>
            <person name="Milshina N.V."/>
            <person name="Mobarry C."/>
            <person name="Morris J."/>
            <person name="Moshrefi A."/>
            <person name="Mount S.M."/>
            <person name="Moy M."/>
            <person name="Murphy B."/>
            <person name="Murphy L."/>
            <person name="Muzny D.M."/>
            <person name="Nelson D.L."/>
            <person name="Nelson D.R."/>
            <person name="Nelson K.A."/>
            <person name="Nixon K."/>
            <person name="Nusskern D.R."/>
            <person name="Pacleb J.M."/>
            <person name="Palazzolo M."/>
            <person name="Pittman G.S."/>
            <person name="Pan S."/>
            <person name="Pollard J."/>
            <person name="Puri V."/>
            <person name="Reese M.G."/>
            <person name="Reinert K."/>
            <person name="Remington K."/>
            <person name="Saunders R.D.C."/>
            <person name="Scheeler F."/>
            <person name="Shen H."/>
            <person name="Shue B.C."/>
            <person name="Siden-Kiamos I."/>
            <person name="Simpson M."/>
            <person name="Skupski M.P."/>
            <person name="Smith T.J."/>
            <person name="Spier E."/>
            <person name="Spradling A.C."/>
            <person name="Stapleton M."/>
            <person name="Strong R."/>
            <person name="Sun E."/>
            <person name="Svirskas R."/>
            <person name="Tector C."/>
            <person name="Turner R."/>
            <person name="Venter E."/>
            <person name="Wang A.H."/>
            <person name="Wang X."/>
            <person name="Wang Z.-Y."/>
            <person name="Wassarman D.A."/>
            <person name="Weinstock G.M."/>
            <person name="Weissenbach J."/>
            <person name="Williams S.M."/>
            <person name="Woodage T."/>
            <person name="Worley K.C."/>
            <person name="Wu D."/>
            <person name="Yang S."/>
            <person name="Yao Q.A."/>
            <person name="Ye J."/>
            <person name="Yeh R.-F."/>
            <person name="Zaveri J.S."/>
            <person name="Zhan M."/>
            <person name="Zhang G."/>
            <person name="Zhao Q."/>
            <person name="Zheng L."/>
            <person name="Zheng X.H."/>
            <person name="Zhong F.N."/>
            <person name="Zhong W."/>
            <person name="Zhou X."/>
            <person name="Zhu S.C."/>
            <person name="Zhu X."/>
            <person name="Smith H.O."/>
            <person name="Gibbs R.A."/>
            <person name="Myers E.W."/>
            <person name="Rubin G.M."/>
            <person name="Venter J.C."/>
        </authorList>
    </citation>
    <scope>NUCLEOTIDE SEQUENCE [LARGE SCALE GENOMIC DNA]</scope>
    <source>
        <strain>Berkeley</strain>
    </source>
</reference>
<reference key="4">
    <citation type="journal article" date="2002" name="Genome Biol.">
        <title>Annotation of the Drosophila melanogaster euchromatic genome: a systematic review.</title>
        <authorList>
            <person name="Misra S."/>
            <person name="Crosby M.A."/>
            <person name="Mungall C.J."/>
            <person name="Matthews B.B."/>
            <person name="Campbell K.S."/>
            <person name="Hradecky P."/>
            <person name="Huang Y."/>
            <person name="Kaminker J.S."/>
            <person name="Millburn G.H."/>
            <person name="Prochnik S.E."/>
            <person name="Smith C.D."/>
            <person name="Tupy J.L."/>
            <person name="Whitfield E.J."/>
            <person name="Bayraktaroglu L."/>
            <person name="Berman B.P."/>
            <person name="Bettencourt B.R."/>
            <person name="Celniker S.E."/>
            <person name="de Grey A.D.N.J."/>
            <person name="Drysdale R.A."/>
            <person name="Harris N.L."/>
            <person name="Richter J."/>
            <person name="Russo S."/>
            <person name="Schroeder A.J."/>
            <person name="Shu S.Q."/>
            <person name="Stapleton M."/>
            <person name="Yamada C."/>
            <person name="Ashburner M."/>
            <person name="Gelbart W.M."/>
            <person name="Rubin G.M."/>
            <person name="Lewis S.E."/>
        </authorList>
    </citation>
    <scope>GENOME REANNOTATION</scope>
    <source>
        <strain>Berkeley</strain>
    </source>
</reference>
<reference key="5">
    <citation type="submission" date="2006-10" db="EMBL/GenBank/DDBJ databases">
        <authorList>
            <person name="Stapleton M."/>
            <person name="Carlson J.W."/>
            <person name="Frise E."/>
            <person name="Kapadia B."/>
            <person name="Park S."/>
            <person name="Wan K.H."/>
            <person name="Yu C."/>
            <person name="Celniker S.E."/>
        </authorList>
    </citation>
    <scope>NUCLEOTIDE SEQUENCE [LARGE SCALE MRNA]</scope>
    <source>
        <strain>Berkeley</strain>
    </source>
</reference>
<comment type="function">
    <text evidence="3 4">Required for visual system development. May transcriptionally regulate genes necessary for optic lobe invagination and Bolwig's nerve formation.</text>
</comment>
<comment type="subcellular location">
    <subcellularLocation>
        <location evidence="1 4">Nucleus</location>
    </subcellularLocation>
</comment>
<comment type="tissue specificity">
    <text evidence="4">In developing embryos, expressed in the eye disk epithelium, bolwig's organ and the optic lobe primordium at areas of invagination. In adults, present in photoreceptor cells in the apical regions of the retina, and in optic lobes.</text>
</comment>
<comment type="developmental stage">
    <text evidence="4">In the eye imaginal disk, first expressed at the onset of the third instar and continues throughout this stage. Expression in the optic lobe primordium begins at stage 5 and disappears when invagination is completed (stage 12). Further expression is noted in optic lobe ganglia in late third instar.</text>
</comment>
<comment type="disruption phenotype">
    <text evidence="3 4">Flies specifically display visual defects. These range from reduced ocelli and ommatidia number in weak loss-of-function phenotypes to complete absence of compound eyes and bolwig's organ in more severe lethal phenotypes.</text>
</comment>
<comment type="similarity">
    <text evidence="5">Belongs to the SIX/Sine oculis homeobox family.</text>
</comment>
<name>SO_DROME</name>